<reference key="1">
    <citation type="journal article" date="1993" name="J. Cell Biol.">
        <title>The 220-kD protein colocalizing with cadherins in non-epithelial cells is identical to ZO-1, a tight junction-associated protein in epithelial cells: cDNA cloning and immunoelectron microscopy.</title>
        <authorList>
            <person name="Itoh M."/>
            <person name="Nagafuchi A."/>
            <person name="Yonemura S."/>
            <person name="Yasuda-Kitani T."/>
            <person name="Tsukita S."/>
            <person name="Tsukita S."/>
        </authorList>
    </citation>
    <scope>NUCLEOTIDE SEQUENCE [MRNA]</scope>
    <source>
        <strain>129</strain>
    </source>
</reference>
<reference key="2">
    <citation type="journal article" date="2009" name="PLoS Biol.">
        <title>Lineage-specific biology revealed by a finished genome assembly of the mouse.</title>
        <authorList>
            <person name="Church D.M."/>
            <person name="Goodstadt L."/>
            <person name="Hillier L.W."/>
            <person name="Zody M.C."/>
            <person name="Goldstein S."/>
            <person name="She X."/>
            <person name="Bult C.J."/>
            <person name="Agarwala R."/>
            <person name="Cherry J.L."/>
            <person name="DiCuccio M."/>
            <person name="Hlavina W."/>
            <person name="Kapustin Y."/>
            <person name="Meric P."/>
            <person name="Maglott D."/>
            <person name="Birtle Z."/>
            <person name="Marques A.C."/>
            <person name="Graves T."/>
            <person name="Zhou S."/>
            <person name="Teague B."/>
            <person name="Potamousis K."/>
            <person name="Churas C."/>
            <person name="Place M."/>
            <person name="Herschleb J."/>
            <person name="Runnheim R."/>
            <person name="Forrest D."/>
            <person name="Amos-Landgraf J."/>
            <person name="Schwartz D.C."/>
            <person name="Cheng Z."/>
            <person name="Lindblad-Toh K."/>
            <person name="Eichler E.E."/>
            <person name="Ponting C.P."/>
        </authorList>
    </citation>
    <scope>NUCLEOTIDE SEQUENCE [LARGE SCALE GENOMIC DNA]</scope>
    <source>
        <strain>C57BL/6J</strain>
    </source>
</reference>
<reference key="3">
    <citation type="journal article" date="1986" name="J. Cell Biol.">
        <title>Identification of ZO-1: a high molecular weight polypeptide associated with the tight junction (zonula occludens) in a variety of epithelia.</title>
        <authorList>
            <person name="Stevenson B.R."/>
            <person name="Siliciano J.D."/>
            <person name="Mooseker M.S."/>
            <person name="Goodenough D.A."/>
        </authorList>
    </citation>
    <scope>SUBCELLULAR LOCATION</scope>
</reference>
<reference key="4">
    <citation type="journal article" date="1999" name="J. Cell Biol.">
        <title>Direct binding of three tight junction-associated MAGUKs, ZO-1, ZO-2, and ZO-3, with the COOH termini of claudins.</title>
        <authorList>
            <person name="Itoh M."/>
            <person name="Furuse M."/>
            <person name="Morita K."/>
            <person name="Kubota K."/>
            <person name="Saitou M."/>
            <person name="Tsukita S."/>
        </authorList>
    </citation>
    <scope>INTERACTION WITH CLAUDINS</scope>
    <scope>SUBCELLULAR LOCATION</scope>
</reference>
<reference key="5">
    <citation type="journal article" date="1999" name="J. Biol. Chem.">
        <title>Characterization of ZO-2 as a MAGUK family member associated with tight as well as adherens junctions with a binding affinity to occludin and alpha catenin.</title>
        <authorList>
            <person name="Itoh M."/>
            <person name="Morita K."/>
            <person name="Tsukita S."/>
        </authorList>
    </citation>
    <scope>INTERACTION WITH TJP2 AND CTNNA1</scope>
</reference>
<reference key="6">
    <citation type="journal article" date="2003" name="FASEB J.">
        <title>NEPH1 defines a novel family of podocin interacting proteins.</title>
        <authorList>
            <person name="Sellin L."/>
            <person name="Huber T.B."/>
            <person name="Gerke P."/>
            <person name="Quack I."/>
            <person name="Pavenstaedt H."/>
            <person name="Walz G."/>
        </authorList>
    </citation>
    <scope>INTERACTION WITH KIRREL1</scope>
    <source>
        <strain>Swiss Webster</strain>
        <tissue>Brain</tissue>
    </source>
</reference>
<reference key="7">
    <citation type="journal article" date="2004" name="Neuroscience">
        <title>Connexin47, connexin29 and connexin32 co-expression in oligodendrocytes and Cx47 association with zonula occludens-1 (ZO-1) in mouse brain.</title>
        <authorList>
            <person name="Li X."/>
            <person name="Ionescu A.V."/>
            <person name="Lynn B.D."/>
            <person name="Lu S."/>
            <person name="Kamasawa N."/>
            <person name="Morita M."/>
            <person name="Davidson K.G.V."/>
            <person name="Yasumura T."/>
            <person name="Rash J.E."/>
            <person name="Nagy J.I."/>
        </authorList>
    </citation>
    <scope>INTERACTION WITH GJA12</scope>
    <scope>DOMAIN</scope>
</reference>
<reference key="8">
    <citation type="journal article" date="2005" name="J. Cell Sci.">
        <title>Bves modulates epithelial integrity through an interaction at the tight junction.</title>
        <authorList>
            <person name="Osler M.E."/>
            <person name="Chang M.S."/>
            <person name="Bader D.M."/>
        </authorList>
    </citation>
    <scope>INTERACTION WITH POPDC1</scope>
</reference>
<reference key="9">
    <citation type="journal article" date="2005" name="Nat. Biotechnol.">
        <title>Immunoaffinity profiling of tyrosine phosphorylation in cancer cells.</title>
        <authorList>
            <person name="Rush J."/>
            <person name="Moritz A."/>
            <person name="Lee K.A."/>
            <person name="Guo A."/>
            <person name="Goss V.L."/>
            <person name="Spek E.J."/>
            <person name="Zhang H."/>
            <person name="Zha X.-M."/>
            <person name="Polakiewicz R.D."/>
            <person name="Comb M.J."/>
        </authorList>
    </citation>
    <scope>IDENTIFICATION BY MASS SPECTROMETRY [LARGE SCALE ANALYSIS]</scope>
</reference>
<reference key="10">
    <citation type="journal article" date="2006" name="Mol. Cell. Proteomics">
        <title>Comprehensive identification of phosphorylation sites in postsynaptic density preparations.</title>
        <authorList>
            <person name="Trinidad J.C."/>
            <person name="Specht C.G."/>
            <person name="Thalhammer A."/>
            <person name="Schoepfer R."/>
            <person name="Burlingame A.L."/>
        </authorList>
    </citation>
    <scope>IDENTIFICATION BY MASS SPECTROMETRY [LARGE SCALE ANALYSIS]</scope>
    <source>
        <tissue>Brain</tissue>
    </source>
</reference>
<reference key="11">
    <citation type="journal article" date="2007" name="J. Immunol.">
        <title>Quantitative time-resolved phosphoproteomic analysis of mast cell signaling.</title>
        <authorList>
            <person name="Cao L."/>
            <person name="Yu K."/>
            <person name="Banh C."/>
            <person name="Nguyen V."/>
            <person name="Ritz A."/>
            <person name="Raphael B.J."/>
            <person name="Kawakami Y."/>
            <person name="Kawakami T."/>
            <person name="Salomon A.R."/>
        </authorList>
    </citation>
    <scope>PHOSPHORYLATION [LARGE SCALE ANALYSIS] AT TYR-1139 AND TYR-1353</scope>
    <scope>IDENTIFICATION BY MASS SPECTROMETRY [LARGE SCALE ANALYSIS]</scope>
    <source>
        <tissue>Mast cell</tissue>
    </source>
</reference>
<reference key="12">
    <citation type="journal article" date="2007" name="Proc. Natl. Acad. Sci. U.S.A.">
        <title>Large-scale phosphorylation analysis of mouse liver.</title>
        <authorList>
            <person name="Villen J."/>
            <person name="Beausoleil S.A."/>
            <person name="Gerber S.A."/>
            <person name="Gygi S.P."/>
        </authorList>
    </citation>
    <scope>PHOSPHORYLATION [LARGE SCALE ANALYSIS] AT SER-912</scope>
    <scope>IDENTIFICATION BY MASS SPECTROMETRY [LARGE SCALE ANALYSIS]</scope>
    <source>
        <tissue>Liver</tissue>
    </source>
</reference>
<reference key="13">
    <citation type="journal article" date="2008" name="J. Proteome Res.">
        <title>Specific phosphopeptide enrichment with immobilized titanium ion affinity chromatography adsorbent for phosphoproteome analysis.</title>
        <authorList>
            <person name="Zhou H."/>
            <person name="Ye M."/>
            <person name="Dong J."/>
            <person name="Han G."/>
            <person name="Jiang X."/>
            <person name="Wu R."/>
            <person name="Zou H."/>
        </authorList>
    </citation>
    <scope>PHOSPHORYLATION [LARGE SCALE ANALYSIS] AT SER-912</scope>
    <scope>IDENTIFICATION BY MASS SPECTROMETRY [LARGE SCALE ANALYSIS]</scope>
    <source>
        <tissue>Liver</tissue>
    </source>
</reference>
<reference key="14">
    <citation type="journal article" date="2009" name="Mol. Cell. Proteomics">
        <title>Large scale localization of protein phosphorylation by use of electron capture dissociation mass spectrometry.</title>
        <authorList>
            <person name="Sweet S.M."/>
            <person name="Bailey C.M."/>
            <person name="Cunningham D.L."/>
            <person name="Heath J.K."/>
            <person name="Cooper H.J."/>
        </authorList>
    </citation>
    <scope>PHOSPHORYLATION [LARGE SCALE ANALYSIS] AT TYR-1164</scope>
    <scope>IDENTIFICATION BY MASS SPECTROMETRY [LARGE SCALE ANALYSIS]</scope>
    <source>
        <tissue>Embryonic fibroblast</tissue>
    </source>
</reference>
<reference key="15">
    <citation type="journal article" date="2010" name="Cell">
        <title>A tissue-specific atlas of mouse protein phosphorylation and expression.</title>
        <authorList>
            <person name="Huttlin E.L."/>
            <person name="Jedrychowski M.P."/>
            <person name="Elias J.E."/>
            <person name="Goswami T."/>
            <person name="Rad R."/>
            <person name="Beausoleil S.A."/>
            <person name="Villen J."/>
            <person name="Haas W."/>
            <person name="Sowa M.E."/>
            <person name="Gygi S.P."/>
        </authorList>
    </citation>
    <scope>PHOSPHORYLATION [LARGE SCALE ANALYSIS] AT SER-125; SER-241; SER-277; SER-280; SER-284; SER-294; SER-323; SER-353; SER-617; SER-810; SER-821; TYR-822; SER-824; THR-848; THR-868; SER-912; SER-1071; SER-1138 AND SER-1542</scope>
    <scope>IDENTIFICATION BY MASS SPECTROMETRY [LARGE SCALE ANALYSIS]</scope>
    <source>
        <tissue>Brain</tissue>
        <tissue>Brown adipose tissue</tissue>
        <tissue>Heart</tissue>
        <tissue>Kidney</tissue>
        <tissue>Liver</tissue>
        <tissue>Lung</tissue>
        <tissue>Pancreas</tissue>
        <tissue>Spleen</tissue>
        <tissue>Testis</tissue>
    </source>
</reference>
<reference key="16">
    <citation type="journal article" date="2010" name="Circ. Res.">
        <title>Myozap, a novel intercalated disc protein, activates serum response factor-dependent signaling and is required to maintain cardiac function in vivo.</title>
        <authorList>
            <person name="Seeger T.S."/>
            <person name="Frank D."/>
            <person name="Rohr C."/>
            <person name="Will R."/>
            <person name="Just S."/>
            <person name="Grund C."/>
            <person name="Lyon R."/>
            <person name="Luedde M."/>
            <person name="Koegl M."/>
            <person name="Sheikh F."/>
            <person name="Rottbauer W."/>
            <person name="Franke W.W."/>
            <person name="Katus H.A."/>
            <person name="Olson E.N."/>
            <person name="Frey N."/>
        </authorList>
    </citation>
    <scope>INTERACTION WITH MYZAP</scope>
    <scope>SUBCELLULAR LOCATION</scope>
    <scope>TISSUE SPECIFICITY</scope>
</reference>
<reference key="17">
    <citation type="journal article" date="2014" name="Am. J. Respir. Cell Mol. Biol.">
        <title>Knockout mice reveal key roles for claudin 18 in alveolar barrier properties and fluid homeostasis.</title>
        <authorList>
            <person name="Li G."/>
            <person name="Flodby P."/>
            <person name="Luo J."/>
            <person name="Kage H."/>
            <person name="Sipos A."/>
            <person name="Gao D."/>
            <person name="Ji Y."/>
            <person name="Beard L.L."/>
            <person name="Marconett C.N."/>
            <person name="DeMaio L."/>
            <person name="Kim Y.H."/>
            <person name="Kim K.J."/>
            <person name="Laird-Offringa I.A."/>
            <person name="Minoo P."/>
            <person name="Liebler J.M."/>
            <person name="Zhou B."/>
            <person name="Crandall E.D."/>
            <person name="Borok Z."/>
        </authorList>
    </citation>
    <scope>SUBCELLULAR LOCATION</scope>
</reference>
<reference key="18">
    <citation type="journal article" date="2014" name="Development">
        <title>Cadherin-based adhesions in the apical endfoot are required for active Notch signaling to control neurogenesis in vertebrates.</title>
        <authorList>
            <person name="Hatakeyama J."/>
            <person name="Wakamatsu Y."/>
            <person name="Nagafuchi A."/>
            <person name="Kageyama R."/>
            <person name="Shigemoto R."/>
            <person name="Shimamura K."/>
        </authorList>
    </citation>
    <scope>INTERACTION WITH DLL1</scope>
</reference>
<reference key="19">
    <citation type="journal article" date="2015" name="J. Neurosci.">
        <title>Progressive hearing loss in mice carrying a mutation in usp53.</title>
        <authorList>
            <person name="Kazmierczak M."/>
            <person name="Harris S.L."/>
            <person name="Kazmierczak P."/>
            <person name="Shah P."/>
            <person name="Starovoytov V."/>
            <person name="Ohlemiller K.K."/>
            <person name="Schwander M."/>
        </authorList>
    </citation>
    <scope>INTERACTION WITH USP53</scope>
</reference>
<reference key="20">
    <citation type="journal article" date="2016" name="PLoS ONE">
        <title>Plakophilin-1, a Novel Wnt Signaling Regulator, Is Critical for Tooth Development and Ameloblast Differentiation.</title>
        <authorList>
            <person name="Miyazaki K."/>
            <person name="Yoshizaki K."/>
            <person name="Arai C."/>
            <person name="Yamada A."/>
            <person name="Saito K."/>
            <person name="Ishikawa M."/>
            <person name="Xue H."/>
            <person name="Funada K."/>
            <person name="Haruyama N."/>
            <person name="Yamada Y."/>
            <person name="Fukumoto S."/>
            <person name="Takahashi I."/>
        </authorList>
    </citation>
    <scope>FUNCTION</scope>
    <scope>INTERACTION WITH PKP1</scope>
    <scope>SUBCELLULAR LOCATION</scope>
    <scope>TISSUE SPECIFICITY</scope>
</reference>
<reference key="21">
    <citation type="journal article" date="2018" name="J. Clin. Invest.">
        <title>Claudin-18-mediated YAP activity regulates lung stem and progenitor cell homeostasis and tumorigenesis.</title>
        <authorList>
            <person name="Zhou B."/>
            <person name="Flodby P."/>
            <person name="Luo J."/>
            <person name="Castillo D.R."/>
            <person name="Liu Y."/>
            <person name="Yu F.X."/>
            <person name="McConnell A."/>
            <person name="Varghese B."/>
            <person name="Li G."/>
            <person name="Chimge N.O."/>
            <person name="Sunohara M."/>
            <person name="Koss M.N."/>
            <person name="Elatre W."/>
            <person name="Conti P."/>
            <person name="Liebler J.M."/>
            <person name="Yang C."/>
            <person name="Marconett C.N."/>
            <person name="Laird-Offringa I.A."/>
            <person name="Minoo P."/>
            <person name="Guan K."/>
            <person name="Stripp B.R."/>
            <person name="Crandall E.D."/>
            <person name="Borok Z."/>
        </authorList>
    </citation>
    <scope>INTERACTION WITH CLDN18</scope>
    <scope>SUBCELLULAR LOCATION</scope>
</reference>
<reference key="22">
    <citation type="journal article" date="2011" name="Biomol. NMR. Assign.">
        <title>(1)H, (13)C, and (15)N resonance assignment of the first PDZ domain of mouse ZO-1.</title>
        <authorList>
            <person name="Umetsu Y."/>
            <person name="Goda N."/>
            <person name="Taniguchi R."/>
            <person name="Satomura K."/>
            <person name="Ikegami T."/>
            <person name="Furuse M."/>
            <person name="Hiroaki H."/>
        </authorList>
    </citation>
    <scope>STRUCTURE BY NMR OF 18-110</scope>
</reference>
<dbReference type="EMBL" id="D14340">
    <property type="protein sequence ID" value="BAA03274.1"/>
    <property type="molecule type" value="mRNA"/>
</dbReference>
<dbReference type="EMBL" id="AC122222">
    <property type="status" value="NOT_ANNOTATED_CDS"/>
    <property type="molecule type" value="Genomic_DNA"/>
</dbReference>
<dbReference type="EMBL" id="AC131741">
    <property type="status" value="NOT_ANNOTATED_CDS"/>
    <property type="molecule type" value="Genomic_DNA"/>
</dbReference>
<dbReference type="CCDS" id="CCDS21338.1"/>
<dbReference type="PIR" id="A46431">
    <property type="entry name" value="A46431"/>
</dbReference>
<dbReference type="RefSeq" id="NP_033412.2">
    <property type="nucleotide sequence ID" value="NM_009386.3"/>
</dbReference>
<dbReference type="PDB" id="2RRM">
    <property type="method" value="NMR"/>
    <property type="chains" value="A=18-110"/>
</dbReference>
<dbReference type="PDBsum" id="2RRM"/>
<dbReference type="BMRB" id="P39447"/>
<dbReference type="SMR" id="P39447"/>
<dbReference type="BioGRID" id="204209">
    <property type="interactions" value="40"/>
</dbReference>
<dbReference type="CORUM" id="P39447"/>
<dbReference type="DIP" id="DIP-30946N"/>
<dbReference type="FunCoup" id="P39447">
    <property type="interactions" value="1901"/>
</dbReference>
<dbReference type="IntAct" id="P39447">
    <property type="interactions" value="20"/>
</dbReference>
<dbReference type="MINT" id="P39447"/>
<dbReference type="STRING" id="10090.ENSMUSP00000099652"/>
<dbReference type="GlyGen" id="P39447">
    <property type="glycosylation" value="6 sites, 2 N-linked glycans (2 sites), 1 O-linked glycan (3 sites)"/>
</dbReference>
<dbReference type="iPTMnet" id="P39447"/>
<dbReference type="PhosphoSitePlus" id="P39447"/>
<dbReference type="SwissPalm" id="P39447"/>
<dbReference type="jPOST" id="P39447"/>
<dbReference type="PaxDb" id="10090-ENSMUSP00000099652"/>
<dbReference type="PeptideAtlas" id="P39447"/>
<dbReference type="ProteomicsDB" id="275155"/>
<dbReference type="Pumba" id="P39447"/>
<dbReference type="Antibodypedia" id="783">
    <property type="antibodies" value="438 antibodies from 40 providers"/>
</dbReference>
<dbReference type="DNASU" id="21872"/>
<dbReference type="Ensembl" id="ENSMUST00000102592.10">
    <property type="protein sequence ID" value="ENSMUSP00000099652.4"/>
    <property type="gene ID" value="ENSMUSG00000030516.15"/>
</dbReference>
<dbReference type="GeneID" id="21872"/>
<dbReference type="KEGG" id="mmu:21872"/>
<dbReference type="UCSC" id="uc009hgp.2">
    <property type="organism name" value="mouse"/>
</dbReference>
<dbReference type="AGR" id="MGI:98759"/>
<dbReference type="CTD" id="7082"/>
<dbReference type="MGI" id="MGI:98759">
    <property type="gene designation" value="Tjp1"/>
</dbReference>
<dbReference type="VEuPathDB" id="HostDB:ENSMUSG00000030516"/>
<dbReference type="eggNOG" id="KOG3580">
    <property type="taxonomic scope" value="Eukaryota"/>
</dbReference>
<dbReference type="GeneTree" id="ENSGT00940000155164"/>
<dbReference type="InParanoid" id="P39447"/>
<dbReference type="OMA" id="QPVHRID"/>
<dbReference type="OrthoDB" id="418634at2759"/>
<dbReference type="PhylomeDB" id="P39447"/>
<dbReference type="TreeFam" id="TF315957"/>
<dbReference type="Reactome" id="R-MMU-191650">
    <property type="pathway name" value="Regulation of gap junction activity"/>
</dbReference>
<dbReference type="Reactome" id="R-MMU-2028269">
    <property type="pathway name" value="Signaling by Hippo"/>
</dbReference>
<dbReference type="Reactome" id="R-MMU-351906">
    <property type="pathway name" value="Apoptotic cleavage of cell adhesion proteins"/>
</dbReference>
<dbReference type="BioGRID-ORCS" id="21872">
    <property type="hits" value="5 hits in 76 CRISPR screens"/>
</dbReference>
<dbReference type="CD-CODE" id="CE726F99">
    <property type="entry name" value="Postsynaptic density"/>
</dbReference>
<dbReference type="ChiTaRS" id="Tjp1">
    <property type="organism name" value="mouse"/>
</dbReference>
<dbReference type="EvolutionaryTrace" id="P39447"/>
<dbReference type="PRO" id="PR:P39447"/>
<dbReference type="Proteomes" id="UP000000589">
    <property type="component" value="Chromosome 7"/>
</dbReference>
<dbReference type="RNAct" id="P39447">
    <property type="molecule type" value="protein"/>
</dbReference>
<dbReference type="Bgee" id="ENSMUSG00000030516">
    <property type="expression patterns" value="Expressed in brain blood vessel and 274 other cell types or tissues"/>
</dbReference>
<dbReference type="ExpressionAtlas" id="P39447">
    <property type="expression patterns" value="baseline and differential"/>
</dbReference>
<dbReference type="GO" id="GO:0005912">
    <property type="term" value="C:adherens junction"/>
    <property type="evidence" value="ECO:0000314"/>
    <property type="project" value="MGI"/>
</dbReference>
<dbReference type="GO" id="GO:0043296">
    <property type="term" value="C:apical junction complex"/>
    <property type="evidence" value="ECO:0000266"/>
    <property type="project" value="MGI"/>
</dbReference>
<dbReference type="GO" id="GO:0045177">
    <property type="term" value="C:apical part of cell"/>
    <property type="evidence" value="ECO:0000314"/>
    <property type="project" value="MGI"/>
</dbReference>
<dbReference type="GO" id="GO:0016324">
    <property type="term" value="C:apical plasma membrane"/>
    <property type="evidence" value="ECO:0000314"/>
    <property type="project" value="MGI"/>
</dbReference>
<dbReference type="GO" id="GO:0016327">
    <property type="term" value="C:apicolateral plasma membrane"/>
    <property type="evidence" value="ECO:0000314"/>
    <property type="project" value="MGI"/>
</dbReference>
<dbReference type="GO" id="GO:0016323">
    <property type="term" value="C:basolateral plasma membrane"/>
    <property type="evidence" value="ECO:0000266"/>
    <property type="project" value="MGI"/>
</dbReference>
<dbReference type="GO" id="GO:0005923">
    <property type="term" value="C:bicellular tight junction"/>
    <property type="evidence" value="ECO:0000314"/>
    <property type="project" value="UniProtKB"/>
</dbReference>
<dbReference type="GO" id="GO:0030054">
    <property type="term" value="C:cell junction"/>
    <property type="evidence" value="ECO:0000314"/>
    <property type="project" value="MGI"/>
</dbReference>
<dbReference type="GO" id="GO:0009986">
    <property type="term" value="C:cell surface"/>
    <property type="evidence" value="ECO:0000266"/>
    <property type="project" value="MGI"/>
</dbReference>
<dbReference type="GO" id="GO:0005911">
    <property type="term" value="C:cell-cell junction"/>
    <property type="evidence" value="ECO:0000314"/>
    <property type="project" value="ARUK-UCL"/>
</dbReference>
<dbReference type="GO" id="GO:0005737">
    <property type="term" value="C:cytoplasm"/>
    <property type="evidence" value="ECO:0000314"/>
    <property type="project" value="MGI"/>
</dbReference>
<dbReference type="GO" id="GO:0005921">
    <property type="term" value="C:gap junction"/>
    <property type="evidence" value="ECO:0000250"/>
    <property type="project" value="UniProtKB"/>
</dbReference>
<dbReference type="GO" id="GO:0031674">
    <property type="term" value="C:I band"/>
    <property type="evidence" value="ECO:0007669"/>
    <property type="project" value="UniProtKB-SubCell"/>
</dbReference>
<dbReference type="GO" id="GO:0014704">
    <property type="term" value="C:intercalated disc"/>
    <property type="evidence" value="ECO:0000314"/>
    <property type="project" value="MGI"/>
</dbReference>
<dbReference type="GO" id="GO:0046581">
    <property type="term" value="C:intercellular canaliculus"/>
    <property type="evidence" value="ECO:0000314"/>
    <property type="project" value="MGI"/>
</dbReference>
<dbReference type="GO" id="GO:0016020">
    <property type="term" value="C:membrane"/>
    <property type="evidence" value="ECO:0000314"/>
    <property type="project" value="MGI"/>
</dbReference>
<dbReference type="GO" id="GO:0005634">
    <property type="term" value="C:nucleus"/>
    <property type="evidence" value="ECO:0000314"/>
    <property type="project" value="ARUK-UCL"/>
</dbReference>
<dbReference type="GO" id="GO:0005886">
    <property type="term" value="C:plasma membrane"/>
    <property type="evidence" value="ECO:0000314"/>
    <property type="project" value="UniProtKB"/>
</dbReference>
<dbReference type="GO" id="GO:0032991">
    <property type="term" value="C:protein-containing complex"/>
    <property type="evidence" value="ECO:0000315"/>
    <property type="project" value="CAFA"/>
</dbReference>
<dbReference type="GO" id="GO:0070160">
    <property type="term" value="C:tight junction"/>
    <property type="evidence" value="ECO:0000314"/>
    <property type="project" value="UniProtKB"/>
</dbReference>
<dbReference type="GO" id="GO:0005516">
    <property type="term" value="F:calmodulin binding"/>
    <property type="evidence" value="ECO:0007669"/>
    <property type="project" value="UniProtKB-KW"/>
</dbReference>
<dbReference type="GO" id="GO:0071253">
    <property type="term" value="F:connexin binding"/>
    <property type="evidence" value="ECO:0000353"/>
    <property type="project" value="CAFA"/>
</dbReference>
<dbReference type="GO" id="GO:0019904">
    <property type="term" value="F:protein domain specific binding"/>
    <property type="evidence" value="ECO:0000353"/>
    <property type="project" value="MGI"/>
</dbReference>
<dbReference type="GO" id="GO:0036305">
    <property type="term" value="P:ameloblast differentiation"/>
    <property type="evidence" value="ECO:0000315"/>
    <property type="project" value="UniProtKB"/>
</dbReference>
<dbReference type="GO" id="GO:0001825">
    <property type="term" value="P:blastocyst formation"/>
    <property type="evidence" value="ECO:0000315"/>
    <property type="project" value="MGI"/>
</dbReference>
<dbReference type="GO" id="GO:0051497">
    <property type="term" value="P:negative regulation of stress fiber assembly"/>
    <property type="evidence" value="ECO:0000315"/>
    <property type="project" value="ARUK-UCL"/>
</dbReference>
<dbReference type="GO" id="GO:1903672">
    <property type="term" value="P:positive regulation of sprouting angiogenesis"/>
    <property type="evidence" value="ECO:0000315"/>
    <property type="project" value="ARUK-UCL"/>
</dbReference>
<dbReference type="GO" id="GO:0150105">
    <property type="term" value="P:protein localization to cell-cell junction"/>
    <property type="evidence" value="ECO:0000315"/>
    <property type="project" value="ARUK-UCL"/>
</dbReference>
<dbReference type="GO" id="GO:0007605">
    <property type="term" value="P:sensory perception of sound"/>
    <property type="evidence" value="ECO:0000315"/>
    <property type="project" value="MGI"/>
</dbReference>
<dbReference type="CDD" id="cd06727">
    <property type="entry name" value="PDZ1_ZO1-like"/>
    <property type="match status" value="1"/>
</dbReference>
<dbReference type="CDD" id="cd06728">
    <property type="entry name" value="PDZ2_ZO1-like_ds"/>
    <property type="match status" value="1"/>
</dbReference>
<dbReference type="CDD" id="cd06729">
    <property type="entry name" value="PDZ3_ZO1-like_domain"/>
    <property type="match status" value="1"/>
</dbReference>
<dbReference type="CDD" id="cd12026">
    <property type="entry name" value="SH3_ZO-1"/>
    <property type="match status" value="1"/>
</dbReference>
<dbReference type="FunFam" id="2.30.42.10:FF:000009">
    <property type="entry name" value="Putative tight junction protein ZO-1"/>
    <property type="match status" value="1"/>
</dbReference>
<dbReference type="FunFam" id="2.30.42.10:FF:000013">
    <property type="entry name" value="Putative tight junction protein ZO-1"/>
    <property type="match status" value="1"/>
</dbReference>
<dbReference type="FunFam" id="2.60.220.30:FF:000004">
    <property type="entry name" value="tight junction protein ZO-1 isoform X1"/>
    <property type="match status" value="1"/>
</dbReference>
<dbReference type="FunFam" id="3.40.50.300:FF:000110">
    <property type="entry name" value="tight junction protein ZO-1 isoform X1"/>
    <property type="match status" value="1"/>
</dbReference>
<dbReference type="FunFam" id="2.30.42.10:FF:000170">
    <property type="entry name" value="tight junction protein ZO-1 isoform X2"/>
    <property type="match status" value="1"/>
</dbReference>
<dbReference type="Gene3D" id="2.30.42.10">
    <property type="match status" value="3"/>
</dbReference>
<dbReference type="Gene3D" id="2.60.220.30">
    <property type="match status" value="1"/>
</dbReference>
<dbReference type="Gene3D" id="3.40.50.300">
    <property type="entry name" value="P-loop containing nucleotide triphosphate hydrolases"/>
    <property type="match status" value="1"/>
</dbReference>
<dbReference type="Gene3D" id="2.30.30.40">
    <property type="entry name" value="SH3 Domains"/>
    <property type="match status" value="1"/>
</dbReference>
<dbReference type="InterPro" id="IPR008145">
    <property type="entry name" value="GK/Ca_channel_bsu"/>
</dbReference>
<dbReference type="InterPro" id="IPR008144">
    <property type="entry name" value="Guanylate_kin-like_dom"/>
</dbReference>
<dbReference type="InterPro" id="IPR027417">
    <property type="entry name" value="P-loop_NTPase"/>
</dbReference>
<dbReference type="InterPro" id="IPR001478">
    <property type="entry name" value="PDZ"/>
</dbReference>
<dbReference type="InterPro" id="IPR036034">
    <property type="entry name" value="PDZ_sf"/>
</dbReference>
<dbReference type="InterPro" id="IPR036028">
    <property type="entry name" value="SH3-like_dom_sf"/>
</dbReference>
<dbReference type="InterPro" id="IPR001452">
    <property type="entry name" value="SH3_domain"/>
</dbReference>
<dbReference type="InterPro" id="IPR005417">
    <property type="entry name" value="ZO"/>
</dbReference>
<dbReference type="InterPro" id="IPR005418">
    <property type="entry name" value="ZO-1"/>
</dbReference>
<dbReference type="InterPro" id="IPR035597">
    <property type="entry name" value="ZO-1_SH3"/>
</dbReference>
<dbReference type="InterPro" id="IPR000906">
    <property type="entry name" value="ZU5_dom"/>
</dbReference>
<dbReference type="PANTHER" id="PTHR13865">
    <property type="entry name" value="TIGHT JUNCTION PROTEIN"/>
    <property type="match status" value="1"/>
</dbReference>
<dbReference type="PANTHER" id="PTHR13865:SF25">
    <property type="entry name" value="TIGHT JUNCTION PROTEIN ZO-1"/>
    <property type="match status" value="1"/>
</dbReference>
<dbReference type="Pfam" id="PF00625">
    <property type="entry name" value="Guanylate_kin"/>
    <property type="match status" value="1"/>
</dbReference>
<dbReference type="Pfam" id="PF00595">
    <property type="entry name" value="PDZ"/>
    <property type="match status" value="3"/>
</dbReference>
<dbReference type="Pfam" id="PF07653">
    <property type="entry name" value="SH3_2"/>
    <property type="match status" value="1"/>
</dbReference>
<dbReference type="Pfam" id="PF00791">
    <property type="entry name" value="ZU5"/>
    <property type="match status" value="1"/>
</dbReference>
<dbReference type="PRINTS" id="PR01597">
    <property type="entry name" value="ZONOCCLUDNS"/>
</dbReference>
<dbReference type="PRINTS" id="PR01598">
    <property type="entry name" value="ZONOCCLUDNS1"/>
</dbReference>
<dbReference type="SMART" id="SM00072">
    <property type="entry name" value="GuKc"/>
    <property type="match status" value="1"/>
</dbReference>
<dbReference type="SMART" id="SM00228">
    <property type="entry name" value="PDZ"/>
    <property type="match status" value="3"/>
</dbReference>
<dbReference type="SMART" id="SM00218">
    <property type="entry name" value="ZU5"/>
    <property type="match status" value="1"/>
</dbReference>
<dbReference type="SUPFAM" id="SSF52540">
    <property type="entry name" value="P-loop containing nucleoside triphosphate hydrolases"/>
    <property type="match status" value="1"/>
</dbReference>
<dbReference type="SUPFAM" id="SSF50156">
    <property type="entry name" value="PDZ domain-like"/>
    <property type="match status" value="3"/>
</dbReference>
<dbReference type="SUPFAM" id="SSF50044">
    <property type="entry name" value="SH3-domain"/>
    <property type="match status" value="1"/>
</dbReference>
<dbReference type="PROSITE" id="PS50052">
    <property type="entry name" value="GUANYLATE_KINASE_2"/>
    <property type="match status" value="1"/>
</dbReference>
<dbReference type="PROSITE" id="PS50106">
    <property type="entry name" value="PDZ"/>
    <property type="match status" value="3"/>
</dbReference>
<dbReference type="PROSITE" id="PS50002">
    <property type="entry name" value="SH3"/>
    <property type="match status" value="1"/>
</dbReference>
<dbReference type="PROSITE" id="PS51145">
    <property type="entry name" value="ZU5"/>
    <property type="match status" value="1"/>
</dbReference>
<keyword id="KW-0002">3D-structure</keyword>
<keyword id="KW-0112">Calmodulin-binding</keyword>
<keyword id="KW-0965">Cell junction</keyword>
<keyword id="KW-1003">Cell membrane</keyword>
<keyword id="KW-0963">Cytoplasm</keyword>
<keyword id="KW-0303">Gap junction</keyword>
<keyword id="KW-0472">Membrane</keyword>
<keyword id="KW-0597">Phosphoprotein</keyword>
<keyword id="KW-1185">Reference proteome</keyword>
<keyword id="KW-0677">Repeat</keyword>
<keyword id="KW-0728">SH3 domain</keyword>
<keyword id="KW-0796">Tight junction</keyword>
<comment type="function">
    <text evidence="2 3 18">Tjp1, TjpP2, and Tjp3 are closely related scaffolding proteins that link tight junction (TJ) transmembrane proteins such as claudins, junctional adhesion molecules, and occludin to the actin cytoskeleton (By similarity). Forms a multistranded TJP1/ZO1 condensate which elongates to form a tight junction belt, the belt is anchored at the apical cell membrane via interaction with PATJ (By similarity). The tight junction acts to limit movement of substances through the paracellular space and as a boundary between the compositionally distinct apical and basolateral plasma membrane domains of epithelial and endothelial cells. Necessary for lumenogenesis, and particularly efficient epithelial polarization and barrier formation (By similarity). Plays a role in the regulation of cell migration by targeting Cdc42bpb to the leading edge of migrating cells (By similarity). Plays an important role in podosome formation and associated function, thus regulating cell adhesion and matrix remodeling (By similarity). With Tjp2 and TJjp3, participates in the junctional retention and stability of the transcription factor Dbpa, but is not involved in its shuttling to the nucleus (By similarity). May play a role in mediating cell morphology changes during ameloblast differentiation via its role in tight junctions (PubMed:27015268).</text>
</comment>
<comment type="subunit">
    <text evidence="2 3 9 10 11 12 13 14 16 17 18 19">Homodimer (By similarity). Forms heterodimers TJP3 (By similarity). Forms a heterodimer (via PDZ2 domain) with TJP2/ZO2 (via PDZ2 domain) (PubMed:10026224). Interacts with OCLN, CALM, claudins, CGN/cingulin, CXADR, GJD3 and UBN1 (PubMed:10601346). Interacts (via ZU5 domain) with CDC42BPB (By similarity). Interacts (via PDZ domain) with GJA1 (By similarity). Interacts (via PDZ domains) with ANKRD2 (By similarity). Interacts with POPDC1 (via the C-terminus cytoplasmic tail) (PubMed:16188940). Interacts with GJA12 and KIRREL1 (PubMed:12424224, PubMed:15183511). Interacts with HSPA4 (By similarity). Interacts (via ZU5 domain) with MYZAP (PubMed:20093627). Interacts with DLL1 (PubMed:24715457). Interacts with USP53 (via the C-terminal region) (PubMed:26609154). Interacts with DNMBP (via C-terminal domain); required for the apical cell-cell junction localization of DNMBP (By similarity). Interacts with SPEF1 (By similarity). Interacts (via N-terminus) with CTNNA1 (PubMed:10026224). Interacts with CLDN18 (PubMed:29400695). Interacts with CLDN16 (via TRV motif); this is a prerequisite for anchoring of CLDN16 at the tight junction. Interacts with PKP1; the interaction facilitates TJP1/ZO-1 localization to the plasma membrane (PubMed:27015268). Interacts with PATJ (via PDZ1-6 domains); the interaction is required for attachment and extension of TJP1/ZO1 condensates along the apical cell interface (By similarity).</text>
</comment>
<comment type="interaction">
    <interactant intactId="EBI-79508">
        <id>P39447</id>
    </interactant>
    <interactant intactId="EBI-445071">
        <id>P57780</id>
        <label>Actn4</label>
    </interactant>
    <organismsDiffer>false</organismsDiffer>
    <experiments>6</experiments>
</comment>
<comment type="interaction">
    <interactant intactId="EBI-79508">
        <id>P39447</id>
    </interactant>
    <interactant intactId="EBI-298630">
        <id>P23242</id>
        <label>Gja1</label>
    </interactant>
    <organismsDiffer>false</organismsDiffer>
    <experiments>4</experiments>
</comment>
<comment type="interaction">
    <interactant intactId="EBI-79508">
        <id>P39447</id>
    </interactant>
    <interactant intactId="EBI-2615416">
        <id>P70689</id>
        <label>Gjb6</label>
    </interactant>
    <organismsDiffer>false</organismsDiffer>
    <experiments>3</experiments>
</comment>
<comment type="interaction">
    <interactant intactId="EBI-79508">
        <id>P39447</id>
    </interactant>
    <interactant intactId="EBI-432047">
        <id>Q64727</id>
        <label>Vcl</label>
    </interactant>
    <organismsDiffer>false</organismsDiffer>
    <experiments>8</experiments>
</comment>
<comment type="subcellular location">
    <subcellularLocation>
        <location evidence="18 19">Cell membrane</location>
        <topology evidence="3">Peripheral membrane protein</topology>
        <orientation evidence="3">Cytoplasmic side</orientation>
    </subcellularLocation>
    <subcellularLocation>
        <location evidence="10 15 20">Cell junction</location>
        <location evidence="10 15 20">Tight junction</location>
    </subcellularLocation>
    <subcellularLocation>
        <location evidence="14">Cell junction</location>
        <location evidence="14">Gap junction</location>
    </subcellularLocation>
    <subcellularLocation>
        <location evidence="14">Cytoplasm</location>
        <location evidence="14">Myofibril</location>
        <location evidence="14">Sarcomere</location>
        <location evidence="14">I band</location>
    </subcellularLocation>
    <text evidence="2 3">Moves from the cytoplasm to the cell membrane concurrently with cell-cell contact (By similarity). Forms a condensed tight junction-linked belt of protein during junction formation which becomes anchored to the apical cell membrane via interaction with PATJ (By similarity). Detected at the leading edge of migrating and wounded cells (By similarity). Colocalizes with SPEF1 at sites of cell-cell contact in intestinal epithelial cells (By similarity).</text>
</comment>
<comment type="tissue specificity">
    <text evidence="18">Expressed between ameloblasts, at ameloblast-ameloblast junctions and in the stratum intermedium during pre-secretory and secretory stages of tooth development (at protein level).</text>
</comment>
<comment type="domain">
    <text evidence="3">The 244-aa domain between residues 633 and 876 is the primary occludin (Ocln)-binding site and is required for stable association with the tight junction (By similarity).</text>
</comment>
<comment type="domain">
    <text evidence="3">The C-terminal region (residues 1151-1372) is an actin-binding region (ABR) that interacts directly with F-actin and plays an important role in the localization of Tjp1 at junctions (By similarity). The ABR is also required for the localization to puncta at the free edge of cells before initiation of cell-cell contact (By similarity). The ABR is also necessary for Tjp1 recruitment to podosomes (By similarity).</text>
</comment>
<comment type="domain">
    <text evidence="3 12">The second PDZ domain (PDZ2) mediates homodimerization and heterodimerization with Tjp2 and Tjp3 (By similarity). PDZ2 domain also mediates interaction with Gja12 (PubMed:15183511).</text>
</comment>
<comment type="PTM">
    <text evidence="3">Phosphorylated at tyrosine redidues in response to epidermal growth factor (EGF) (By similarity). This response is dependent on an intact actin microfilament system (By similarity). Dephosphorylated by PTPRJ (By similarity).</text>
</comment>
<comment type="similarity">
    <text evidence="22">Belongs to the MAGUK family.</text>
</comment>
<protein>
    <recommendedName>
        <fullName evidence="23">Tight junction protein 1</fullName>
    </recommendedName>
    <alternativeName>
        <fullName evidence="21">Tight junction protein ZO-1</fullName>
    </alternativeName>
    <alternativeName>
        <fullName>Zona occludens protein 1</fullName>
    </alternativeName>
    <alternativeName>
        <fullName>Zonula occludens protein 1</fullName>
    </alternativeName>
</protein>
<organism>
    <name type="scientific">Mus musculus</name>
    <name type="common">Mouse</name>
    <dbReference type="NCBI Taxonomy" id="10090"/>
    <lineage>
        <taxon>Eukaryota</taxon>
        <taxon>Metazoa</taxon>
        <taxon>Chordata</taxon>
        <taxon>Craniata</taxon>
        <taxon>Vertebrata</taxon>
        <taxon>Euteleostomi</taxon>
        <taxon>Mammalia</taxon>
        <taxon>Eutheria</taxon>
        <taxon>Euarchontoglires</taxon>
        <taxon>Glires</taxon>
        <taxon>Rodentia</taxon>
        <taxon>Myomorpha</taxon>
        <taxon>Muroidea</taxon>
        <taxon>Muridae</taxon>
        <taxon>Murinae</taxon>
        <taxon>Mus</taxon>
        <taxon>Mus</taxon>
    </lineage>
</organism>
<evidence type="ECO:0000250" key="1">
    <source>
        <dbReference type="UniProtKB" id="A0A0G2K2P5"/>
    </source>
</evidence>
<evidence type="ECO:0000250" key="2">
    <source>
        <dbReference type="UniProtKB" id="O97758"/>
    </source>
</evidence>
<evidence type="ECO:0000250" key="3">
    <source>
        <dbReference type="UniProtKB" id="Q07157"/>
    </source>
</evidence>
<evidence type="ECO:0000255" key="4">
    <source>
        <dbReference type="PROSITE-ProRule" id="PRU00100"/>
    </source>
</evidence>
<evidence type="ECO:0000255" key="5">
    <source>
        <dbReference type="PROSITE-ProRule" id="PRU00143"/>
    </source>
</evidence>
<evidence type="ECO:0000255" key="6">
    <source>
        <dbReference type="PROSITE-ProRule" id="PRU00192"/>
    </source>
</evidence>
<evidence type="ECO:0000255" key="7">
    <source>
        <dbReference type="PROSITE-ProRule" id="PRU00485"/>
    </source>
</evidence>
<evidence type="ECO:0000256" key="8">
    <source>
        <dbReference type="SAM" id="MobiDB-lite"/>
    </source>
</evidence>
<evidence type="ECO:0000269" key="9">
    <source>
    </source>
</evidence>
<evidence type="ECO:0000269" key="10">
    <source>
    </source>
</evidence>
<evidence type="ECO:0000269" key="11">
    <source>
    </source>
</evidence>
<evidence type="ECO:0000269" key="12">
    <source>
    </source>
</evidence>
<evidence type="ECO:0000269" key="13">
    <source>
    </source>
</evidence>
<evidence type="ECO:0000269" key="14">
    <source>
    </source>
</evidence>
<evidence type="ECO:0000269" key="15">
    <source>
    </source>
</evidence>
<evidence type="ECO:0000269" key="16">
    <source>
    </source>
</evidence>
<evidence type="ECO:0000269" key="17">
    <source>
    </source>
</evidence>
<evidence type="ECO:0000269" key="18">
    <source>
    </source>
</evidence>
<evidence type="ECO:0000269" key="19">
    <source>
    </source>
</evidence>
<evidence type="ECO:0000269" key="20">
    <source>
    </source>
</evidence>
<evidence type="ECO:0000303" key="21">
    <source>
    </source>
</evidence>
<evidence type="ECO:0000305" key="22"/>
<evidence type="ECO:0000312" key="23">
    <source>
        <dbReference type="MGI" id="MGI:98759"/>
    </source>
</evidence>
<evidence type="ECO:0007744" key="24">
    <source>
    </source>
</evidence>
<evidence type="ECO:0007744" key="25">
    <source>
    </source>
</evidence>
<evidence type="ECO:0007744" key="26">
    <source>
    </source>
</evidence>
<evidence type="ECO:0007744" key="27">
    <source>
    </source>
</evidence>
<evidence type="ECO:0007744" key="28">
    <source>
    </source>
</evidence>
<evidence type="ECO:0007829" key="29">
    <source>
        <dbReference type="PDB" id="2RRM"/>
    </source>
</evidence>
<proteinExistence type="evidence at protein level"/>
<sequence>MSARAAAAKSTAMEETAIWEQHTVTLHRAPGFGFGIAISGGRDNPHFQSGETSIVISDVLKGGPAEGQLQENDRVAMVNGVSMDNVEHAFAVQQLRKSGKNAKITIRRKKKVQIPVSHPDPEPVSDNEDDSYDEEVHDPRAGRGALANRRSEKSWARDRSASRERSLSPRSDRRSVASSQPAKPTKVTLVKSRKNEEYGLRLASHIFVKEISQDSLAARDGNIQEGDVVLKINGTVTENMSLTDAKTLIERSKGKLKMVVQRDERATLLNVPDLSDSIHSANASERDDISEIQSLASDHSGRSHDRPPRRSQSRSPDQRSEPSDHSTQSPQQPSNGSLRSREEERMSKPGAISTPVKHVDDHPPKAVEEVTVEKNEKQTPTLPEPKPVYAQVGQPDVDLPVSPSDGALPNSAHEDGILRPSMKLVKFRKGDSVGLRLAGGNDVGIFVAGVLEDSPAAKEGLEEGDQILRVNNVDFTNIIREEAVLFLLDLPKGEEVTILAQKKKDVYRRIVESDVGDSFYIRTHFEYEKESPYGLSFNKGEVFRVVDTLYNGKLGSWLAIRIGKNHKEVERGIIPNKNRAEQLASVQYTLPKTAGGDRADFWRFRGLRSSKRNLRKSREDLSAQPVQTKFPAYERVVLREAGFLRPVTIFGPIADVAREKLAREEPDIYQIAKSEPRDAGTDHRSSGIIRLHTIKQIIDQDKHALLDVTPNAVDRLNYAQWYPIVVFLNPDSKQGVKTMRMRLCPESRKSARKLYERSHKLRKNNHHLFTTTINLNSMNDGWYGALKEAIQQQQNQLVWVSEGKADGATSDDLDLHDDRLSYLSAPGSEYSMYSTDSRHTSDYEDTDTEGGAYTDQELDETLNDEVGTPPESAITRSSEPVREDSSGMHHENQTYPPYSPQAQPQAIHRIDSPGLKPASQQKAEASSPVPYLSPETTPASSASAVNHNVSVTNVSLEEPAPAPPTSHASQPGCLGAPSAEAAHVVLRGEGPPLPPHADPAKVYRKEPYSEEMMRQNHILKQPALGHPGQRPDKEPNLAYEPQLPYIEKQASRDLEQPSYRYEVSSYTDQFSRNYDHRLRFEDRIPTYEDQWSYYDDKQPYQPRPFENQHPRDLDSRQHPEEASERGYFQRFEEPAPLSYDSRTRYEQLPRTSTLRHEEQPAPAYEVHNRYRPEAQPYSSTGPKSSEPKQYFDQYPRSYEQVPPPGFTSKTGHYEPLHGAAVVPPLIPSSQQKPEVLPSATKPQPPPPTLTEEEEDPAMKPQSVLTRVKMFENKRSASLENKKDVNDTASFKPPEVASKPPGASLAGPKPVPQSQFSEHDKTLYRLPEPQKPQVKPPEDIVRSNHYDPEEDEEYYRKQLSYFDRRSFESKPSAHLPAGHHSEPAKPVHSQSQPNFSSYSSKGKPETDAVDRSFSEKRYDPAQATPPPPPLPSQYSQPAPPLSSSSLHIHSKGAQGEGNSVSLDFQNSYMSKPDPPPSQSKPATFRPPTREDPPQTFYPQKSFPDKAPVNGAEQTQKTITPVYNRFTPKPYTSSARPFERKFESPKFNHNLLPSETVHKPELSSKTPTSPKTLMKAHSSTQPPEFDSGVETFSVHTDKPKYQMNNISTMPKAVPVSPSAVEEDEDEDGHTVVATARGIFNSNGGVLSSIETGVSIIIPQGAIPEGIEQEIYFKVCRDNSILPPLDKEKGETLLSPLVMCGPHGLKFLKPVELRLPHCDPKTWQNKCLPGDPNYLVGANCVSVLIDHF</sequence>
<accession>P39447</accession>
<accession>E9QK00</accession>
<feature type="chain" id="PRO_0000094541" description="Tight junction protein 1">
    <location>
        <begin position="1"/>
        <end position="1745"/>
    </location>
</feature>
<feature type="domain" description="PDZ 1" evidence="5">
    <location>
        <begin position="23"/>
        <end position="110"/>
    </location>
</feature>
<feature type="domain" description="PDZ 2" evidence="5">
    <location>
        <begin position="186"/>
        <end position="264"/>
    </location>
</feature>
<feature type="domain" description="PDZ 3" evidence="5">
    <location>
        <begin position="421"/>
        <end position="502"/>
    </location>
</feature>
<feature type="domain" description="SH3" evidence="6">
    <location>
        <begin position="516"/>
        <end position="584"/>
    </location>
</feature>
<feature type="domain" description="Guanylate kinase-like" evidence="4">
    <location>
        <begin position="610"/>
        <end position="791"/>
    </location>
</feature>
<feature type="domain" description="ZU5" evidence="7">
    <location>
        <begin position="1631"/>
        <end position="1745"/>
    </location>
</feature>
<feature type="region of interest" description="Disordered" evidence="8">
    <location>
        <begin position="102"/>
        <end position="189"/>
    </location>
</feature>
<feature type="region of interest" description="Disordered" evidence="8">
    <location>
        <begin position="296"/>
        <end position="364"/>
    </location>
</feature>
<feature type="region of interest" description="Occludin (OCLN)-binding region" evidence="3">
    <location>
        <begin position="633"/>
        <end position="876"/>
    </location>
</feature>
<feature type="region of interest" description="Disordered" evidence="8">
    <location>
        <begin position="825"/>
        <end position="944"/>
    </location>
</feature>
<feature type="region of interest" description="Disordered" evidence="8">
    <location>
        <begin position="956"/>
        <end position="1042"/>
    </location>
</feature>
<feature type="region of interest" description="Disordered" evidence="8">
    <location>
        <begin position="1090"/>
        <end position="1586"/>
    </location>
</feature>
<feature type="region of interest" description="Actin-binding region (ABR)" evidence="3">
    <location>
        <begin position="1150"/>
        <end position="1370"/>
    </location>
</feature>
<feature type="compositionally biased region" description="Basic residues" evidence="8">
    <location>
        <begin position="102"/>
        <end position="112"/>
    </location>
</feature>
<feature type="compositionally biased region" description="Acidic residues" evidence="8">
    <location>
        <begin position="123"/>
        <end position="136"/>
    </location>
</feature>
<feature type="compositionally biased region" description="Basic and acidic residues" evidence="8">
    <location>
        <begin position="149"/>
        <end position="175"/>
    </location>
</feature>
<feature type="compositionally biased region" description="Basic and acidic residues" evidence="8">
    <location>
        <begin position="299"/>
        <end position="308"/>
    </location>
</feature>
<feature type="compositionally biased region" description="Polar residues" evidence="8">
    <location>
        <begin position="325"/>
        <end position="338"/>
    </location>
</feature>
<feature type="compositionally biased region" description="Basic and acidic residues" evidence="8">
    <location>
        <begin position="879"/>
        <end position="892"/>
    </location>
</feature>
<feature type="compositionally biased region" description="Low complexity" evidence="8">
    <location>
        <begin position="893"/>
        <end position="906"/>
    </location>
</feature>
<feature type="compositionally biased region" description="Basic and acidic residues" evidence="8">
    <location>
        <begin position="998"/>
        <end position="1014"/>
    </location>
</feature>
<feature type="compositionally biased region" description="Basic and acidic residues" evidence="8">
    <location>
        <begin position="1106"/>
        <end position="1124"/>
    </location>
</feature>
<feature type="compositionally biased region" description="Basic and acidic residues" evidence="8">
    <location>
        <begin position="1268"/>
        <end position="1285"/>
    </location>
</feature>
<feature type="compositionally biased region" description="Basic and acidic residues" evidence="8">
    <location>
        <begin position="1335"/>
        <end position="1346"/>
    </location>
</feature>
<feature type="compositionally biased region" description="Low complexity" evidence="8">
    <location>
        <begin position="1388"/>
        <end position="1399"/>
    </location>
</feature>
<feature type="compositionally biased region" description="Basic and acidic residues" evidence="8">
    <location>
        <begin position="1401"/>
        <end position="1418"/>
    </location>
</feature>
<feature type="compositionally biased region" description="Low complexity" evidence="8">
    <location>
        <begin position="1431"/>
        <end position="1445"/>
    </location>
</feature>
<feature type="compositionally biased region" description="Polar residues" evidence="8">
    <location>
        <begin position="1455"/>
        <end position="1468"/>
    </location>
</feature>
<feature type="compositionally biased region" description="Polar residues" evidence="8">
    <location>
        <begin position="1510"/>
        <end position="1519"/>
    </location>
</feature>
<feature type="compositionally biased region" description="Basic and acidic residues" evidence="8">
    <location>
        <begin position="1535"/>
        <end position="1544"/>
    </location>
</feature>
<feature type="compositionally biased region" description="Polar residues" evidence="8">
    <location>
        <begin position="1561"/>
        <end position="1580"/>
    </location>
</feature>
<feature type="modified residue" description="Phosphoserine" evidence="28">
    <location>
        <position position="125"/>
    </location>
</feature>
<feature type="modified residue" description="Phosphotyrosine" evidence="1">
    <location>
        <position position="132"/>
    </location>
</feature>
<feature type="modified residue" description="Phosphoserine" evidence="3">
    <location>
        <position position="175"/>
    </location>
</feature>
<feature type="modified residue" description="Phosphoserine" evidence="3">
    <location>
        <position position="178"/>
    </location>
</feature>
<feature type="modified residue" description="Phosphoserine" evidence="3">
    <location>
        <position position="179"/>
    </location>
</feature>
<feature type="modified residue" description="Phosphothreonine" evidence="3">
    <location>
        <position position="185"/>
    </location>
</feature>
<feature type="modified residue" description="Phosphoserine" evidence="3">
    <location>
        <position position="212"/>
    </location>
</feature>
<feature type="modified residue" description="Phosphoserine" evidence="28">
    <location>
        <position position="241"/>
    </location>
</feature>
<feature type="modified residue" description="Phosphothreonine" evidence="3">
    <location>
        <position position="267"/>
    </location>
</feature>
<feature type="modified residue" description="Phosphoserine" evidence="3">
    <location>
        <position position="275"/>
    </location>
</feature>
<feature type="modified residue" description="Phosphoserine" evidence="28">
    <location>
        <position position="277"/>
    </location>
</feature>
<feature type="modified residue" description="Phosphoserine" evidence="28">
    <location>
        <position position="280"/>
    </location>
</feature>
<feature type="modified residue" description="Phosphoserine" evidence="28">
    <location>
        <position position="284"/>
    </location>
</feature>
<feature type="modified residue" description="Phosphoserine" evidence="3">
    <location>
        <position position="290"/>
    </location>
</feature>
<feature type="modified residue" description="Phosphoserine" evidence="28">
    <location>
        <position position="294"/>
    </location>
</feature>
<feature type="modified residue" description="Phosphoserine" evidence="3">
    <location>
        <position position="297"/>
    </location>
</feature>
<feature type="modified residue" description="Phosphoserine" evidence="3">
    <location>
        <position position="300"/>
    </location>
</feature>
<feature type="modified residue" description="Phosphoserine" evidence="28">
    <location>
        <position position="323"/>
    </location>
</feature>
<feature type="modified residue" description="Phosphoserine" evidence="3">
    <location>
        <position position="329"/>
    </location>
</feature>
<feature type="modified residue" description="Phosphoserine" evidence="3">
    <location>
        <position position="334"/>
    </location>
</feature>
<feature type="modified residue" description="Phosphoserine" evidence="3">
    <location>
        <position position="337"/>
    </location>
</feature>
<feature type="modified residue" description="Phosphoserine" evidence="28">
    <location>
        <position position="353"/>
    </location>
</feature>
<feature type="modified residue" description="Phosphothreonine" evidence="3">
    <location>
        <position position="354"/>
    </location>
</feature>
<feature type="modified residue" description="Phosphoserine" evidence="28">
    <location>
        <position position="617"/>
    </location>
</feature>
<feature type="modified residue" description="Phosphoserine" evidence="3">
    <location>
        <position position="622"/>
    </location>
</feature>
<feature type="modified residue" description="Phosphothreonine" evidence="3">
    <location>
        <position position="809"/>
    </location>
</feature>
<feature type="modified residue" description="Phosphoserine" evidence="28">
    <location>
        <position position="810"/>
    </location>
</feature>
<feature type="modified residue" description="Phosphoserine" evidence="28">
    <location>
        <position position="821"/>
    </location>
</feature>
<feature type="modified residue" description="Phosphotyrosine" evidence="28">
    <location>
        <position position="822"/>
    </location>
</feature>
<feature type="modified residue" description="Phosphoserine" evidence="28">
    <location>
        <position position="824"/>
    </location>
</feature>
<feature type="modified residue" description="Phosphoserine" evidence="1">
    <location>
        <position position="828"/>
    </location>
</feature>
<feature type="modified residue" description="Phosphoserine" evidence="3">
    <location>
        <position position="837"/>
    </location>
</feature>
<feature type="modified residue" description="Phosphothreonine" evidence="1">
    <location>
        <position position="846"/>
    </location>
</feature>
<feature type="modified residue" description="Phosphothreonine" evidence="28">
    <location>
        <position position="848"/>
    </location>
</feature>
<feature type="modified residue" description="Phosphothreonine" evidence="3">
    <location>
        <position position="854"/>
    </location>
</feature>
<feature type="modified residue" description="Phosphothreonine" evidence="3">
    <location>
        <position position="861"/>
    </location>
</feature>
<feature type="modified residue" description="Phosphothreonine" evidence="28">
    <location>
        <position position="868"/>
    </location>
</feature>
<feature type="modified residue" description="Phosphoserine" evidence="24 26 28">
    <location>
        <position position="912"/>
    </location>
</feature>
<feature type="modified residue" description="Phosphoserine" evidence="28">
    <location>
        <position position="1071"/>
    </location>
</feature>
<feature type="modified residue" description="Phosphoserine" evidence="28">
    <location>
        <position position="1138"/>
    </location>
</feature>
<feature type="modified residue" description="Phosphotyrosine" evidence="25">
    <location>
        <position position="1139"/>
    </location>
</feature>
<feature type="modified residue" description="Phosphotyrosine" evidence="27">
    <location>
        <position position="1164"/>
    </location>
</feature>
<feature type="modified residue" description="Phosphotyrosine" evidence="25">
    <location>
        <position position="1353"/>
    </location>
</feature>
<feature type="modified residue" description="Phosphoserine" evidence="3">
    <location>
        <position position="1365"/>
    </location>
</feature>
<feature type="modified residue" description="Phosphoserine" evidence="3">
    <location>
        <position position="1411"/>
    </location>
</feature>
<feature type="modified residue" description="Phosphoserine" evidence="28">
    <location>
        <position position="1542"/>
    </location>
</feature>
<feature type="modified residue" description="Phosphoserine" evidence="3">
    <location>
        <position position="1614"/>
    </location>
</feature>
<feature type="sequence conflict" description="In Ref. 1; BAA03274." evidence="22" ref="1">
    <original>L</original>
    <variation>P</variation>
    <location>
        <position position="202"/>
    </location>
</feature>
<feature type="sequence conflict" description="In Ref. 1; BAA03274." evidence="22" ref="1">
    <original>N</original>
    <variation>D</variation>
    <location>
        <position position="222"/>
    </location>
</feature>
<feature type="sequence conflict" description="In Ref. 1; BAA03274." evidence="22" ref="1">
    <original>P</original>
    <variation>L</variation>
    <location>
        <position position="676"/>
    </location>
</feature>
<feature type="sequence conflict" description="In Ref. 1; BAA03274." evidence="22" ref="1">
    <original>V</original>
    <variation>G</variation>
    <location>
        <position position="985"/>
    </location>
</feature>
<feature type="sequence conflict" description="In Ref. 1; BAA03274." evidence="22" ref="1">
    <original>P</original>
    <variation>R</variation>
    <location>
        <position position="1237"/>
    </location>
</feature>
<feature type="sequence conflict" description="In Ref. 1; BAA03274." evidence="22" ref="1">
    <original>S</original>
    <variation>P</variation>
    <location>
        <position position="1395"/>
    </location>
</feature>
<feature type="sequence conflict" description="In Ref. 1; BAA03274." evidence="22" ref="1">
    <original>D</original>
    <variation>G</variation>
    <location>
        <position position="1584"/>
    </location>
</feature>
<feature type="strand" evidence="29">
    <location>
        <begin position="20"/>
        <end position="26"/>
    </location>
</feature>
<feature type="strand" evidence="29">
    <location>
        <begin position="36"/>
        <end position="39"/>
    </location>
</feature>
<feature type="strand" evidence="29">
    <location>
        <begin position="44"/>
        <end position="46"/>
    </location>
</feature>
<feature type="turn" evidence="29">
    <location>
        <begin position="49"/>
        <end position="51"/>
    </location>
</feature>
<feature type="strand" evidence="29">
    <location>
        <begin position="55"/>
        <end position="59"/>
    </location>
</feature>
<feature type="strand" evidence="29">
    <location>
        <begin position="61"/>
        <end position="63"/>
    </location>
</feature>
<feature type="turn" evidence="29">
    <location>
        <begin position="64"/>
        <end position="68"/>
    </location>
</feature>
<feature type="strand" evidence="29">
    <location>
        <begin position="73"/>
        <end position="78"/>
    </location>
</feature>
<feature type="strand" evidence="29">
    <location>
        <begin position="84"/>
        <end position="86"/>
    </location>
</feature>
<feature type="helix" evidence="29">
    <location>
        <begin position="88"/>
        <end position="96"/>
    </location>
</feature>
<feature type="strand" evidence="29">
    <location>
        <begin position="102"/>
        <end position="108"/>
    </location>
</feature>
<gene>
    <name evidence="23" type="primary">Tjp1</name>
    <name evidence="21" type="synonym">Zo1</name>
</gene>
<name>ZO1_MOUSE</name>